<organism>
    <name type="scientific">Arabidopsis thaliana</name>
    <name type="common">Mouse-ear cress</name>
    <dbReference type="NCBI Taxonomy" id="3702"/>
    <lineage>
        <taxon>Eukaryota</taxon>
        <taxon>Viridiplantae</taxon>
        <taxon>Streptophyta</taxon>
        <taxon>Embryophyta</taxon>
        <taxon>Tracheophyta</taxon>
        <taxon>Spermatophyta</taxon>
        <taxon>Magnoliopsida</taxon>
        <taxon>eudicotyledons</taxon>
        <taxon>Gunneridae</taxon>
        <taxon>Pentapetalae</taxon>
        <taxon>rosids</taxon>
        <taxon>malvids</taxon>
        <taxon>Brassicales</taxon>
        <taxon>Brassicaceae</taxon>
        <taxon>Camelineae</taxon>
        <taxon>Arabidopsis</taxon>
    </lineage>
</organism>
<reference evidence="3" key="1">
    <citation type="journal article" date="1997" name="J. Biol. Chem.">
        <title>Differential extraction and protein sequencing reveals major differences in patterns of primary cell wall proteins from plants.</title>
        <authorList>
            <person name="Robertson D."/>
            <person name="Mitchell G.P."/>
            <person name="Gilroy J.S."/>
            <person name="Gerrish C."/>
            <person name="Bolwell G.P."/>
            <person name="Slabas A.R."/>
        </authorList>
    </citation>
    <scope>PROTEIN SEQUENCE</scope>
    <scope>SUBCELLULAR LOCATION</scope>
    <source>
        <strain>cv. Landsberg erecta</strain>
    </source>
</reference>
<feature type="chain" id="PRO_0000079627" description="60 kDa cell wall protein">
    <location>
        <begin position="1"/>
        <end position="7" status="greater than"/>
    </location>
</feature>
<feature type="non-terminal residue" evidence="2">
    <location>
        <position position="7"/>
    </location>
</feature>
<sequence>KGVNDGT</sequence>
<comment type="subcellular location">
    <subcellularLocation>
        <location evidence="1">Secreted</location>
        <location evidence="1">Cell wall</location>
    </subcellularLocation>
</comment>
<proteinExistence type="evidence at protein level"/>
<dbReference type="GO" id="GO:0005576">
    <property type="term" value="C:extracellular region"/>
    <property type="evidence" value="ECO:0007669"/>
    <property type="project" value="UniProtKB-KW"/>
</dbReference>
<accession>P80827</accession>
<evidence type="ECO:0000269" key="1">
    <source>
    </source>
</evidence>
<evidence type="ECO:0000303" key="2">
    <source>
    </source>
</evidence>
<evidence type="ECO:0000305" key="3"/>
<name>CWP03_ARATH</name>
<protein>
    <recommendedName>
        <fullName>60 kDa cell wall protein</fullName>
    </recommendedName>
</protein>
<keyword id="KW-0134">Cell wall</keyword>
<keyword id="KW-0903">Direct protein sequencing</keyword>
<keyword id="KW-0964">Secreted</keyword>